<name>RUVB_LACDB</name>
<gene>
    <name evidence="1" type="primary">ruvB</name>
    <name type="ordered locus">LBUL_1492</name>
</gene>
<evidence type="ECO:0000255" key="1">
    <source>
        <dbReference type="HAMAP-Rule" id="MF_00016"/>
    </source>
</evidence>
<organism>
    <name type="scientific">Lactobacillus delbrueckii subsp. bulgaricus (strain ATCC BAA-365 / Lb-18)</name>
    <dbReference type="NCBI Taxonomy" id="321956"/>
    <lineage>
        <taxon>Bacteria</taxon>
        <taxon>Bacillati</taxon>
        <taxon>Bacillota</taxon>
        <taxon>Bacilli</taxon>
        <taxon>Lactobacillales</taxon>
        <taxon>Lactobacillaceae</taxon>
        <taxon>Lactobacillus</taxon>
    </lineage>
</organism>
<proteinExistence type="inferred from homology"/>
<comment type="function">
    <text evidence="1">The RuvA-RuvB-RuvC complex processes Holliday junction (HJ) DNA during genetic recombination and DNA repair, while the RuvA-RuvB complex plays an important role in the rescue of blocked DNA replication forks via replication fork reversal (RFR). RuvA specifically binds to HJ cruciform DNA, conferring on it an open structure. The RuvB hexamer acts as an ATP-dependent pump, pulling dsDNA into and through the RuvAB complex. RuvB forms 2 homohexamers on either side of HJ DNA bound by 1 or 2 RuvA tetramers; 4 subunits per hexamer contact DNA at a time. Coordinated motions by a converter formed by DNA-disengaged RuvB subunits stimulates ATP hydrolysis and nucleotide exchange. Immobilization of the converter enables RuvB to convert the ATP-contained energy into a lever motion, pulling 2 nucleotides of DNA out of the RuvA tetramer per ATP hydrolyzed, thus driving DNA branch migration. The RuvB motors rotate together with the DNA substrate, which together with the progressing nucleotide cycle form the mechanistic basis for DNA recombination by continuous HJ branch migration. Branch migration allows RuvC to scan DNA until it finds its consensus sequence, where it cleaves and resolves cruciform DNA.</text>
</comment>
<comment type="catalytic activity">
    <reaction evidence="1">
        <text>ATP + H2O = ADP + phosphate + H(+)</text>
        <dbReference type="Rhea" id="RHEA:13065"/>
        <dbReference type="ChEBI" id="CHEBI:15377"/>
        <dbReference type="ChEBI" id="CHEBI:15378"/>
        <dbReference type="ChEBI" id="CHEBI:30616"/>
        <dbReference type="ChEBI" id="CHEBI:43474"/>
        <dbReference type="ChEBI" id="CHEBI:456216"/>
    </reaction>
</comment>
<comment type="subunit">
    <text evidence="1">Homohexamer. Forms an RuvA(8)-RuvB(12)-Holliday junction (HJ) complex. HJ DNA is sandwiched between 2 RuvA tetramers; dsDNA enters through RuvA and exits via RuvB. An RuvB hexamer assembles on each DNA strand where it exits the tetramer. Each RuvB hexamer is contacted by two RuvA subunits (via domain III) on 2 adjacent RuvB subunits; this complex drives branch migration. In the full resolvosome a probable DNA-RuvA(4)-RuvB(12)-RuvC(2) complex forms which resolves the HJ.</text>
</comment>
<comment type="subcellular location">
    <subcellularLocation>
        <location evidence="1">Cytoplasm</location>
    </subcellularLocation>
</comment>
<comment type="domain">
    <text evidence="1">Has 3 domains, the large (RuvB-L) and small ATPase (RuvB-S) domains and the C-terminal head (RuvB-H) domain. The head domain binds DNA, while the ATPase domains jointly bind ATP, ADP or are empty depending on the state of the subunit in the translocation cycle. During a single DNA translocation step the structure of each domain remains the same, but their relative positions change.</text>
</comment>
<comment type="similarity">
    <text evidence="1">Belongs to the RuvB family.</text>
</comment>
<feature type="chain" id="PRO_0000322805" description="Holliday junction branch migration complex subunit RuvB">
    <location>
        <begin position="1"/>
        <end position="336"/>
    </location>
</feature>
<feature type="region of interest" description="Large ATPase domain (RuvB-L)" evidence="1">
    <location>
        <begin position="1"/>
        <end position="183"/>
    </location>
</feature>
<feature type="region of interest" description="Small ATPAse domain (RuvB-S)" evidence="1">
    <location>
        <begin position="184"/>
        <end position="254"/>
    </location>
</feature>
<feature type="region of interest" description="Head domain (RuvB-H)" evidence="1">
    <location>
        <begin position="257"/>
        <end position="336"/>
    </location>
</feature>
<feature type="binding site" evidence="1">
    <location>
        <position position="22"/>
    </location>
    <ligand>
        <name>ATP</name>
        <dbReference type="ChEBI" id="CHEBI:30616"/>
    </ligand>
</feature>
<feature type="binding site" evidence="1">
    <location>
        <position position="23"/>
    </location>
    <ligand>
        <name>ATP</name>
        <dbReference type="ChEBI" id="CHEBI:30616"/>
    </ligand>
</feature>
<feature type="binding site" evidence="1">
    <location>
        <position position="64"/>
    </location>
    <ligand>
        <name>ATP</name>
        <dbReference type="ChEBI" id="CHEBI:30616"/>
    </ligand>
</feature>
<feature type="binding site" evidence="1">
    <location>
        <position position="67"/>
    </location>
    <ligand>
        <name>ATP</name>
        <dbReference type="ChEBI" id="CHEBI:30616"/>
    </ligand>
</feature>
<feature type="binding site" evidence="1">
    <location>
        <position position="68"/>
    </location>
    <ligand>
        <name>ATP</name>
        <dbReference type="ChEBI" id="CHEBI:30616"/>
    </ligand>
</feature>
<feature type="binding site" evidence="1">
    <location>
        <position position="68"/>
    </location>
    <ligand>
        <name>Mg(2+)</name>
        <dbReference type="ChEBI" id="CHEBI:18420"/>
    </ligand>
</feature>
<feature type="binding site" evidence="1">
    <location>
        <position position="69"/>
    </location>
    <ligand>
        <name>ATP</name>
        <dbReference type="ChEBI" id="CHEBI:30616"/>
    </ligand>
</feature>
<feature type="binding site" evidence="1">
    <location>
        <begin position="130"/>
        <end position="132"/>
    </location>
    <ligand>
        <name>ATP</name>
        <dbReference type="ChEBI" id="CHEBI:30616"/>
    </ligand>
</feature>
<feature type="binding site" evidence="1">
    <location>
        <position position="173"/>
    </location>
    <ligand>
        <name>ATP</name>
        <dbReference type="ChEBI" id="CHEBI:30616"/>
    </ligand>
</feature>
<feature type="binding site" evidence="1">
    <location>
        <position position="183"/>
    </location>
    <ligand>
        <name>ATP</name>
        <dbReference type="ChEBI" id="CHEBI:30616"/>
    </ligand>
</feature>
<feature type="binding site" evidence="1">
    <location>
        <position position="220"/>
    </location>
    <ligand>
        <name>ATP</name>
        <dbReference type="ChEBI" id="CHEBI:30616"/>
    </ligand>
</feature>
<feature type="binding site" evidence="1">
    <location>
        <position position="293"/>
    </location>
    <ligand>
        <name>DNA</name>
        <dbReference type="ChEBI" id="CHEBI:16991"/>
    </ligand>
</feature>
<feature type="binding site" evidence="1">
    <location>
        <position position="317"/>
    </location>
    <ligand>
        <name>DNA</name>
        <dbReference type="ChEBI" id="CHEBI:16991"/>
    </ligand>
</feature>
<dbReference type="EC" id="3.6.4.-" evidence="1"/>
<dbReference type="EMBL" id="CP000412">
    <property type="protein sequence ID" value="ABJ58985.1"/>
    <property type="molecule type" value="Genomic_DNA"/>
</dbReference>
<dbReference type="RefSeq" id="WP_003615731.1">
    <property type="nucleotide sequence ID" value="NC_008529.1"/>
</dbReference>
<dbReference type="SMR" id="Q048Y7"/>
<dbReference type="KEGG" id="lbu:LBUL_1492"/>
<dbReference type="HOGENOM" id="CLU_055599_1_0_9"/>
<dbReference type="BioCyc" id="LDEL321956:LBUL_RS07050-MONOMER"/>
<dbReference type="GO" id="GO:0005737">
    <property type="term" value="C:cytoplasm"/>
    <property type="evidence" value="ECO:0007669"/>
    <property type="project" value="UniProtKB-SubCell"/>
</dbReference>
<dbReference type="GO" id="GO:0048476">
    <property type="term" value="C:Holliday junction resolvase complex"/>
    <property type="evidence" value="ECO:0007669"/>
    <property type="project" value="UniProtKB-UniRule"/>
</dbReference>
<dbReference type="GO" id="GO:0005524">
    <property type="term" value="F:ATP binding"/>
    <property type="evidence" value="ECO:0007669"/>
    <property type="project" value="UniProtKB-UniRule"/>
</dbReference>
<dbReference type="GO" id="GO:0016887">
    <property type="term" value="F:ATP hydrolysis activity"/>
    <property type="evidence" value="ECO:0007669"/>
    <property type="project" value="InterPro"/>
</dbReference>
<dbReference type="GO" id="GO:0000400">
    <property type="term" value="F:four-way junction DNA binding"/>
    <property type="evidence" value="ECO:0007669"/>
    <property type="project" value="UniProtKB-UniRule"/>
</dbReference>
<dbReference type="GO" id="GO:0009378">
    <property type="term" value="F:four-way junction helicase activity"/>
    <property type="evidence" value="ECO:0007669"/>
    <property type="project" value="InterPro"/>
</dbReference>
<dbReference type="GO" id="GO:0006310">
    <property type="term" value="P:DNA recombination"/>
    <property type="evidence" value="ECO:0007669"/>
    <property type="project" value="UniProtKB-UniRule"/>
</dbReference>
<dbReference type="GO" id="GO:0006281">
    <property type="term" value="P:DNA repair"/>
    <property type="evidence" value="ECO:0007669"/>
    <property type="project" value="UniProtKB-UniRule"/>
</dbReference>
<dbReference type="CDD" id="cd00009">
    <property type="entry name" value="AAA"/>
    <property type="match status" value="1"/>
</dbReference>
<dbReference type="Gene3D" id="1.10.8.60">
    <property type="match status" value="1"/>
</dbReference>
<dbReference type="Gene3D" id="3.40.50.300">
    <property type="entry name" value="P-loop containing nucleotide triphosphate hydrolases"/>
    <property type="match status" value="1"/>
</dbReference>
<dbReference type="Gene3D" id="1.10.10.10">
    <property type="entry name" value="Winged helix-like DNA-binding domain superfamily/Winged helix DNA-binding domain"/>
    <property type="match status" value="1"/>
</dbReference>
<dbReference type="HAMAP" id="MF_00016">
    <property type="entry name" value="DNA_HJ_migration_RuvB"/>
    <property type="match status" value="1"/>
</dbReference>
<dbReference type="InterPro" id="IPR003593">
    <property type="entry name" value="AAA+_ATPase"/>
</dbReference>
<dbReference type="InterPro" id="IPR041445">
    <property type="entry name" value="AAA_lid_4"/>
</dbReference>
<dbReference type="InterPro" id="IPR004605">
    <property type="entry name" value="DNA_helicase_Holl-junc_RuvB"/>
</dbReference>
<dbReference type="InterPro" id="IPR027417">
    <property type="entry name" value="P-loop_NTPase"/>
</dbReference>
<dbReference type="InterPro" id="IPR008824">
    <property type="entry name" value="RuvB-like_N"/>
</dbReference>
<dbReference type="InterPro" id="IPR008823">
    <property type="entry name" value="RuvB_C"/>
</dbReference>
<dbReference type="InterPro" id="IPR036388">
    <property type="entry name" value="WH-like_DNA-bd_sf"/>
</dbReference>
<dbReference type="InterPro" id="IPR036390">
    <property type="entry name" value="WH_DNA-bd_sf"/>
</dbReference>
<dbReference type="NCBIfam" id="NF000868">
    <property type="entry name" value="PRK00080.1"/>
    <property type="match status" value="1"/>
</dbReference>
<dbReference type="NCBIfam" id="TIGR00635">
    <property type="entry name" value="ruvB"/>
    <property type="match status" value="1"/>
</dbReference>
<dbReference type="PANTHER" id="PTHR42848">
    <property type="match status" value="1"/>
</dbReference>
<dbReference type="PANTHER" id="PTHR42848:SF1">
    <property type="entry name" value="HOLLIDAY JUNCTION BRANCH MIGRATION COMPLEX SUBUNIT RUVB"/>
    <property type="match status" value="1"/>
</dbReference>
<dbReference type="Pfam" id="PF17864">
    <property type="entry name" value="AAA_lid_4"/>
    <property type="match status" value="1"/>
</dbReference>
<dbReference type="Pfam" id="PF05491">
    <property type="entry name" value="RuvB_C"/>
    <property type="match status" value="1"/>
</dbReference>
<dbReference type="Pfam" id="PF05496">
    <property type="entry name" value="RuvB_N"/>
    <property type="match status" value="1"/>
</dbReference>
<dbReference type="SMART" id="SM00382">
    <property type="entry name" value="AAA"/>
    <property type="match status" value="1"/>
</dbReference>
<dbReference type="SUPFAM" id="SSF52540">
    <property type="entry name" value="P-loop containing nucleoside triphosphate hydrolases"/>
    <property type="match status" value="1"/>
</dbReference>
<dbReference type="SUPFAM" id="SSF46785">
    <property type="entry name" value="Winged helix' DNA-binding domain"/>
    <property type="match status" value="1"/>
</dbReference>
<sequence length="336" mass="37275">MTEEHLTSQEAAEGEEAVELSLRPQLLSQYIGQGHVKKDMEVYIQAARQRDEALDHVLLYGPPGLGKTTLAFVIANELGVNLKSTSGPAIERAGDLVALLTDLEPGDVLFIDEIHRLAKPVEEVLYSAMEDFYIDIVVGEGQTTHAIHLPLPPFTLIGATTLAGQLSAPLRDRFGIVEHMQYYQVEDLEKIILRSSEVFHTKISPQAAHELARRSRGTPRVANRLLKRVRDFAEVKGEKEISLETTAMALKQLQVDSAGLDQTDRKLLRTMILSYGGGPVGIRTLASNIGEDRETIESLYEPYLLQNGFIVMTPRGRVVTQKAYQQLNLPLPGEEE</sequence>
<protein>
    <recommendedName>
        <fullName evidence="1">Holliday junction branch migration complex subunit RuvB</fullName>
        <ecNumber evidence="1">3.6.4.-</ecNumber>
    </recommendedName>
</protein>
<accession>Q048Y7</accession>
<keyword id="KW-0067">ATP-binding</keyword>
<keyword id="KW-0963">Cytoplasm</keyword>
<keyword id="KW-0227">DNA damage</keyword>
<keyword id="KW-0233">DNA recombination</keyword>
<keyword id="KW-0234">DNA repair</keyword>
<keyword id="KW-0238">DNA-binding</keyword>
<keyword id="KW-0378">Hydrolase</keyword>
<keyword id="KW-0547">Nucleotide-binding</keyword>
<reference key="1">
    <citation type="journal article" date="2006" name="Proc. Natl. Acad. Sci. U.S.A.">
        <title>Comparative genomics of the lactic acid bacteria.</title>
        <authorList>
            <person name="Makarova K.S."/>
            <person name="Slesarev A."/>
            <person name="Wolf Y.I."/>
            <person name="Sorokin A."/>
            <person name="Mirkin B."/>
            <person name="Koonin E.V."/>
            <person name="Pavlov A."/>
            <person name="Pavlova N."/>
            <person name="Karamychev V."/>
            <person name="Polouchine N."/>
            <person name="Shakhova V."/>
            <person name="Grigoriev I."/>
            <person name="Lou Y."/>
            <person name="Rohksar D."/>
            <person name="Lucas S."/>
            <person name="Huang K."/>
            <person name="Goodstein D.M."/>
            <person name="Hawkins T."/>
            <person name="Plengvidhya V."/>
            <person name="Welker D."/>
            <person name="Hughes J."/>
            <person name="Goh Y."/>
            <person name="Benson A."/>
            <person name="Baldwin K."/>
            <person name="Lee J.-H."/>
            <person name="Diaz-Muniz I."/>
            <person name="Dosti B."/>
            <person name="Smeianov V."/>
            <person name="Wechter W."/>
            <person name="Barabote R."/>
            <person name="Lorca G."/>
            <person name="Altermann E."/>
            <person name="Barrangou R."/>
            <person name="Ganesan B."/>
            <person name="Xie Y."/>
            <person name="Rawsthorne H."/>
            <person name="Tamir D."/>
            <person name="Parker C."/>
            <person name="Breidt F."/>
            <person name="Broadbent J.R."/>
            <person name="Hutkins R."/>
            <person name="O'Sullivan D."/>
            <person name="Steele J."/>
            <person name="Unlu G."/>
            <person name="Saier M.H. Jr."/>
            <person name="Klaenhammer T."/>
            <person name="Richardson P."/>
            <person name="Kozyavkin S."/>
            <person name="Weimer B.C."/>
            <person name="Mills D.A."/>
        </authorList>
    </citation>
    <scope>NUCLEOTIDE SEQUENCE [LARGE SCALE GENOMIC DNA]</scope>
    <source>
        <strain>ATCC BAA-365 / Lb-18</strain>
    </source>
</reference>